<organism>
    <name type="scientific">Photobacterium profundum (strain SS9)</name>
    <dbReference type="NCBI Taxonomy" id="298386"/>
    <lineage>
        <taxon>Bacteria</taxon>
        <taxon>Pseudomonadati</taxon>
        <taxon>Pseudomonadota</taxon>
        <taxon>Gammaproteobacteria</taxon>
        <taxon>Vibrionales</taxon>
        <taxon>Vibrionaceae</taxon>
        <taxon>Photobacterium</taxon>
    </lineage>
</organism>
<sequence>MAKKVEAYIKLQVAAGAANPSPPVGPALGQHGVNIMEFCKAFNARTDSVEKGLPTPVVITVYSDRSFTFITKTPPAAVLLKKAAGVKSGSGRPNTEKVGTVTDAQVQEIAETKAADMTGADIEAMKRSIAGTARSMGLVVEG</sequence>
<protein>
    <recommendedName>
        <fullName evidence="1">Large ribosomal subunit protein uL11</fullName>
    </recommendedName>
    <alternativeName>
        <fullName evidence="2">50S ribosomal protein L11</fullName>
    </alternativeName>
</protein>
<dbReference type="EMBL" id="CR378674">
    <property type="protein sequence ID" value="CAG21720.1"/>
    <property type="molecule type" value="Genomic_DNA"/>
</dbReference>
<dbReference type="RefSeq" id="WP_011219961.1">
    <property type="nucleotide sequence ID" value="NC_006370.1"/>
</dbReference>
<dbReference type="SMR" id="P62440"/>
<dbReference type="STRING" id="298386.PBPRA3436"/>
<dbReference type="KEGG" id="ppr:PBPRA3436"/>
<dbReference type="eggNOG" id="COG0080">
    <property type="taxonomic scope" value="Bacteria"/>
</dbReference>
<dbReference type="HOGENOM" id="CLU_074237_2_0_6"/>
<dbReference type="Proteomes" id="UP000000593">
    <property type="component" value="Chromosome 1"/>
</dbReference>
<dbReference type="GO" id="GO:0022625">
    <property type="term" value="C:cytosolic large ribosomal subunit"/>
    <property type="evidence" value="ECO:0007669"/>
    <property type="project" value="TreeGrafter"/>
</dbReference>
<dbReference type="GO" id="GO:0070180">
    <property type="term" value="F:large ribosomal subunit rRNA binding"/>
    <property type="evidence" value="ECO:0007669"/>
    <property type="project" value="UniProtKB-UniRule"/>
</dbReference>
<dbReference type="GO" id="GO:0003735">
    <property type="term" value="F:structural constituent of ribosome"/>
    <property type="evidence" value="ECO:0007669"/>
    <property type="project" value="InterPro"/>
</dbReference>
<dbReference type="GO" id="GO:0006412">
    <property type="term" value="P:translation"/>
    <property type="evidence" value="ECO:0007669"/>
    <property type="project" value="UniProtKB-UniRule"/>
</dbReference>
<dbReference type="CDD" id="cd00349">
    <property type="entry name" value="Ribosomal_L11"/>
    <property type="match status" value="1"/>
</dbReference>
<dbReference type="FunFam" id="1.10.10.250:FF:000001">
    <property type="entry name" value="50S ribosomal protein L11"/>
    <property type="match status" value="1"/>
</dbReference>
<dbReference type="FunFam" id="3.30.1550.10:FF:000001">
    <property type="entry name" value="50S ribosomal protein L11"/>
    <property type="match status" value="1"/>
</dbReference>
<dbReference type="Gene3D" id="1.10.10.250">
    <property type="entry name" value="Ribosomal protein L11, C-terminal domain"/>
    <property type="match status" value="1"/>
</dbReference>
<dbReference type="Gene3D" id="3.30.1550.10">
    <property type="entry name" value="Ribosomal protein L11/L12, N-terminal domain"/>
    <property type="match status" value="1"/>
</dbReference>
<dbReference type="HAMAP" id="MF_00736">
    <property type="entry name" value="Ribosomal_uL11"/>
    <property type="match status" value="1"/>
</dbReference>
<dbReference type="InterPro" id="IPR000911">
    <property type="entry name" value="Ribosomal_uL11"/>
</dbReference>
<dbReference type="InterPro" id="IPR006519">
    <property type="entry name" value="Ribosomal_uL11_bac-typ"/>
</dbReference>
<dbReference type="InterPro" id="IPR020783">
    <property type="entry name" value="Ribosomal_uL11_C"/>
</dbReference>
<dbReference type="InterPro" id="IPR036769">
    <property type="entry name" value="Ribosomal_uL11_C_sf"/>
</dbReference>
<dbReference type="InterPro" id="IPR020785">
    <property type="entry name" value="Ribosomal_uL11_CS"/>
</dbReference>
<dbReference type="InterPro" id="IPR020784">
    <property type="entry name" value="Ribosomal_uL11_N"/>
</dbReference>
<dbReference type="InterPro" id="IPR036796">
    <property type="entry name" value="Ribosomal_uL11_N_sf"/>
</dbReference>
<dbReference type="NCBIfam" id="TIGR01632">
    <property type="entry name" value="L11_bact"/>
    <property type="match status" value="1"/>
</dbReference>
<dbReference type="PANTHER" id="PTHR11661">
    <property type="entry name" value="60S RIBOSOMAL PROTEIN L12"/>
    <property type="match status" value="1"/>
</dbReference>
<dbReference type="PANTHER" id="PTHR11661:SF1">
    <property type="entry name" value="LARGE RIBOSOMAL SUBUNIT PROTEIN UL11M"/>
    <property type="match status" value="1"/>
</dbReference>
<dbReference type="Pfam" id="PF00298">
    <property type="entry name" value="Ribosomal_L11"/>
    <property type="match status" value="1"/>
</dbReference>
<dbReference type="Pfam" id="PF03946">
    <property type="entry name" value="Ribosomal_L11_N"/>
    <property type="match status" value="1"/>
</dbReference>
<dbReference type="SMART" id="SM00649">
    <property type="entry name" value="RL11"/>
    <property type="match status" value="1"/>
</dbReference>
<dbReference type="SUPFAM" id="SSF54747">
    <property type="entry name" value="Ribosomal L11/L12e N-terminal domain"/>
    <property type="match status" value="1"/>
</dbReference>
<dbReference type="SUPFAM" id="SSF46906">
    <property type="entry name" value="Ribosomal protein L11, C-terminal domain"/>
    <property type="match status" value="1"/>
</dbReference>
<dbReference type="PROSITE" id="PS00359">
    <property type="entry name" value="RIBOSOMAL_L11"/>
    <property type="match status" value="1"/>
</dbReference>
<keyword id="KW-0488">Methylation</keyword>
<keyword id="KW-1185">Reference proteome</keyword>
<keyword id="KW-0687">Ribonucleoprotein</keyword>
<keyword id="KW-0689">Ribosomal protein</keyword>
<keyword id="KW-0694">RNA-binding</keyword>
<keyword id="KW-0699">rRNA-binding</keyword>
<feature type="chain" id="PRO_0000104335" description="Large ribosomal subunit protein uL11">
    <location>
        <begin position="1"/>
        <end position="142"/>
    </location>
</feature>
<comment type="function">
    <text evidence="1">Forms part of the ribosomal stalk which helps the ribosome interact with GTP-bound translation factors.</text>
</comment>
<comment type="subunit">
    <text evidence="1">Part of the ribosomal stalk of the 50S ribosomal subunit. Interacts with L10 and the large rRNA to form the base of the stalk. L10 forms an elongated spine to which L12 dimers bind in a sequential fashion forming a multimeric L10(L12)X complex.</text>
</comment>
<comment type="PTM">
    <text evidence="1">One or more lysine residues are methylated.</text>
</comment>
<comment type="similarity">
    <text evidence="1">Belongs to the universal ribosomal protein uL11 family.</text>
</comment>
<reference key="1">
    <citation type="journal article" date="2005" name="Science">
        <title>Life at depth: Photobacterium profundum genome sequence and expression analysis.</title>
        <authorList>
            <person name="Vezzi A."/>
            <person name="Campanaro S."/>
            <person name="D'Angelo M."/>
            <person name="Simonato F."/>
            <person name="Vitulo N."/>
            <person name="Lauro F.M."/>
            <person name="Cestaro A."/>
            <person name="Malacrida G."/>
            <person name="Simionati B."/>
            <person name="Cannata N."/>
            <person name="Romualdi C."/>
            <person name="Bartlett D.H."/>
            <person name="Valle G."/>
        </authorList>
    </citation>
    <scope>NUCLEOTIDE SEQUENCE [LARGE SCALE GENOMIC DNA]</scope>
    <source>
        <strain>ATCC BAA-1253 / SS9</strain>
    </source>
</reference>
<accession>P62440</accession>
<proteinExistence type="inferred from homology"/>
<evidence type="ECO:0000255" key="1">
    <source>
        <dbReference type="HAMAP-Rule" id="MF_00736"/>
    </source>
</evidence>
<evidence type="ECO:0000305" key="2"/>
<gene>
    <name evidence="1" type="primary">rplK</name>
    <name type="ordered locus">PBPRA3436</name>
</gene>
<name>RL11_PHOPR</name>